<accession>P15979</accession>
<dbReference type="EMBL" id="X12780">
    <property type="protein sequence ID" value="CAA31272.1"/>
    <property type="molecule type" value="mRNA"/>
</dbReference>
<dbReference type="EMBL" id="M31012">
    <property type="protein sequence ID" value="AAA48947.1"/>
    <property type="molecule type" value="Genomic_DNA"/>
</dbReference>
<dbReference type="PIR" id="A45846">
    <property type="entry name" value="HLCHB4"/>
</dbReference>
<dbReference type="PDB" id="5YMV">
    <property type="method" value="X-ray"/>
    <property type="resolution" value="2.20 A"/>
    <property type="chains" value="A/D=23-292"/>
</dbReference>
<dbReference type="PDB" id="5YMW">
    <property type="method" value="X-ray"/>
    <property type="resolution" value="2.00 A"/>
    <property type="chains" value="A/D/G/J=23-292"/>
</dbReference>
<dbReference type="PDBsum" id="5YMV"/>
<dbReference type="PDBsum" id="5YMW"/>
<dbReference type="SMR" id="P15979"/>
<dbReference type="FunCoup" id="P15979">
    <property type="interactions" value="42"/>
</dbReference>
<dbReference type="STRING" id="9031.ENSGALP00000043493"/>
<dbReference type="GlyGen" id="P15979">
    <property type="glycosylation" value="3 sites"/>
</dbReference>
<dbReference type="VEuPathDB" id="HostDB:geneid_693260"/>
<dbReference type="eggNOG" id="ENOG502RQEK">
    <property type="taxonomic scope" value="Eukaryota"/>
</dbReference>
<dbReference type="InParanoid" id="P15979"/>
<dbReference type="Proteomes" id="UP000000539">
    <property type="component" value="Unassembled WGS sequence"/>
</dbReference>
<dbReference type="GO" id="GO:0009897">
    <property type="term" value="C:external side of plasma membrane"/>
    <property type="evidence" value="ECO:0000318"/>
    <property type="project" value="GO_Central"/>
</dbReference>
<dbReference type="GO" id="GO:0005615">
    <property type="term" value="C:extracellular space"/>
    <property type="evidence" value="ECO:0000318"/>
    <property type="project" value="GO_Central"/>
</dbReference>
<dbReference type="GO" id="GO:0042612">
    <property type="term" value="C:MHC class I protein complex"/>
    <property type="evidence" value="ECO:0007669"/>
    <property type="project" value="UniProtKB-KW"/>
</dbReference>
<dbReference type="GO" id="GO:0002474">
    <property type="term" value="P:antigen processing and presentation of peptide antigen via MHC class I"/>
    <property type="evidence" value="ECO:0007669"/>
    <property type="project" value="UniProtKB-KW"/>
</dbReference>
<dbReference type="GO" id="GO:0006955">
    <property type="term" value="P:immune response"/>
    <property type="evidence" value="ECO:0000318"/>
    <property type="project" value="GO_Central"/>
</dbReference>
<dbReference type="CDD" id="cd21029">
    <property type="entry name" value="IgC1_CD1"/>
    <property type="match status" value="1"/>
</dbReference>
<dbReference type="FunFam" id="3.30.500.10:FF:000001">
    <property type="entry name" value="H-2 class I histocompatibility antigen, alpha chain"/>
    <property type="match status" value="1"/>
</dbReference>
<dbReference type="FunFam" id="2.60.40.10:FF:000204">
    <property type="entry name" value="Major histocompatibility complex, class I-related protein"/>
    <property type="match status" value="1"/>
</dbReference>
<dbReference type="Gene3D" id="2.60.40.10">
    <property type="entry name" value="Immunoglobulins"/>
    <property type="match status" value="1"/>
</dbReference>
<dbReference type="Gene3D" id="3.30.500.10">
    <property type="entry name" value="MHC class I-like antigen recognition-like"/>
    <property type="match status" value="1"/>
</dbReference>
<dbReference type="InterPro" id="IPR007110">
    <property type="entry name" value="Ig-like_dom"/>
</dbReference>
<dbReference type="InterPro" id="IPR036179">
    <property type="entry name" value="Ig-like_dom_sf"/>
</dbReference>
<dbReference type="InterPro" id="IPR013783">
    <property type="entry name" value="Ig-like_fold"/>
</dbReference>
<dbReference type="InterPro" id="IPR003006">
    <property type="entry name" value="Ig/MHC_CS"/>
</dbReference>
<dbReference type="InterPro" id="IPR003597">
    <property type="entry name" value="Ig_C1-set"/>
</dbReference>
<dbReference type="InterPro" id="IPR050208">
    <property type="entry name" value="MHC_class-I_related"/>
</dbReference>
<dbReference type="InterPro" id="IPR011161">
    <property type="entry name" value="MHC_I-like_Ag-recog"/>
</dbReference>
<dbReference type="InterPro" id="IPR037055">
    <property type="entry name" value="MHC_I-like_Ag-recog_sf"/>
</dbReference>
<dbReference type="InterPro" id="IPR011162">
    <property type="entry name" value="MHC_I/II-like_Ag-recog"/>
</dbReference>
<dbReference type="InterPro" id="IPR001039">
    <property type="entry name" value="MHC_I_a_a1/a2"/>
</dbReference>
<dbReference type="PANTHER" id="PTHR16675:SF242">
    <property type="entry name" value="MAJOR HISTOCOMPATIBILITY COMPLEX CLASS I-RELATED GENE PROTEIN"/>
    <property type="match status" value="1"/>
</dbReference>
<dbReference type="PANTHER" id="PTHR16675">
    <property type="entry name" value="MHC CLASS I-RELATED"/>
    <property type="match status" value="1"/>
</dbReference>
<dbReference type="Pfam" id="PF07654">
    <property type="entry name" value="C1-set"/>
    <property type="match status" value="1"/>
</dbReference>
<dbReference type="Pfam" id="PF00129">
    <property type="entry name" value="MHC_I"/>
    <property type="match status" value="1"/>
</dbReference>
<dbReference type="PRINTS" id="PR01638">
    <property type="entry name" value="MHCCLASSI"/>
</dbReference>
<dbReference type="SMART" id="SM00407">
    <property type="entry name" value="IGc1"/>
    <property type="match status" value="1"/>
</dbReference>
<dbReference type="SUPFAM" id="SSF48726">
    <property type="entry name" value="Immunoglobulin"/>
    <property type="match status" value="1"/>
</dbReference>
<dbReference type="SUPFAM" id="SSF54452">
    <property type="entry name" value="MHC antigen-recognition domain"/>
    <property type="match status" value="1"/>
</dbReference>
<dbReference type="PROSITE" id="PS50835">
    <property type="entry name" value="IG_LIKE"/>
    <property type="match status" value="1"/>
</dbReference>
<dbReference type="PROSITE" id="PS00290">
    <property type="entry name" value="IG_MHC"/>
    <property type="match status" value="1"/>
</dbReference>
<proteinExistence type="evidence at protein level"/>
<reference key="1">
    <citation type="journal article" date="1988" name="EMBO J.">
        <title>A molecular map of the chicken major histocompatibility complex: the class II beta genes are closely linked to the class I genes and the nucleolar organizer.</title>
        <authorList>
            <person name="Guillemot F."/>
            <person name="Billault A."/>
            <person name="Pourquie O."/>
            <person name="Behar G."/>
            <person name="Chausse A.M."/>
            <person name="Zoorob R."/>
            <person name="Kreibich G."/>
            <person name="Auffray C."/>
        </authorList>
    </citation>
    <scope>NUCLEOTIDE SEQUENCE [MRNA]</scope>
    <source>
        <strain>B12</strain>
        <tissue>Liver</tissue>
    </source>
</reference>
<reference key="2">
    <citation type="journal article" date="1990" name="Immunogenetics">
        <title>Structure and expression of a chicken MHC class I gene.</title>
        <authorList>
            <person name="Kroemer G."/>
            <person name="Zoorob R."/>
            <person name="Auffray C."/>
        </authorList>
    </citation>
    <scope>NUCLEOTIDE SEQUENCE [GENOMIC DNA]</scope>
</reference>
<organism>
    <name type="scientific">Gallus gallus</name>
    <name type="common">Chicken</name>
    <dbReference type="NCBI Taxonomy" id="9031"/>
    <lineage>
        <taxon>Eukaryota</taxon>
        <taxon>Metazoa</taxon>
        <taxon>Chordata</taxon>
        <taxon>Craniata</taxon>
        <taxon>Vertebrata</taxon>
        <taxon>Euteleostomi</taxon>
        <taxon>Archelosauria</taxon>
        <taxon>Archosauria</taxon>
        <taxon>Dinosauria</taxon>
        <taxon>Saurischia</taxon>
        <taxon>Theropoda</taxon>
        <taxon>Coelurosauria</taxon>
        <taxon>Aves</taxon>
        <taxon>Neognathae</taxon>
        <taxon>Galloanserae</taxon>
        <taxon>Galliformes</taxon>
        <taxon>Phasianidae</taxon>
        <taxon>Phasianinae</taxon>
        <taxon>Gallus</taxon>
    </lineage>
</organism>
<evidence type="ECO:0000255" key="1"/>
<evidence type="ECO:0000255" key="2">
    <source>
        <dbReference type="PROSITE-ProRule" id="PRU00114"/>
    </source>
</evidence>
<evidence type="ECO:0000305" key="3"/>
<evidence type="ECO:0007829" key="4">
    <source>
        <dbReference type="PDB" id="5YMW"/>
    </source>
</evidence>
<name>HA1F_CHICK</name>
<protein>
    <recommendedName>
        <fullName>Class I histocompatibility antigen, F10 alpha chain</fullName>
    </recommendedName>
    <alternativeName>
        <fullName>B-F histocompatibility F10 antigen</fullName>
    </alternativeName>
    <alternativeName>
        <fullName>B-F-beta-IV</fullName>
    </alternativeName>
    <alternativeName>
        <fullName>B12</fullName>
    </alternativeName>
</protein>
<comment type="function">
    <text>Involved in the presentation of foreign antigens to the immune system.</text>
</comment>
<comment type="subunit">
    <text>Heterodimer of an alpha chain and a beta chain (beta-2-microglobulin).</text>
</comment>
<comment type="subcellular location">
    <subcellularLocation>
        <location>Membrane</location>
        <topology>Single-pass type I membrane protein</topology>
    </subcellularLocation>
</comment>
<comment type="similarity">
    <text evidence="3">Belongs to the MHC class I family.</text>
</comment>
<keyword id="KW-0002">3D-structure</keyword>
<keyword id="KW-1015">Disulfide bond</keyword>
<keyword id="KW-0325">Glycoprotein</keyword>
<keyword id="KW-0391">Immunity</keyword>
<keyword id="KW-0472">Membrane</keyword>
<keyword id="KW-0490">MHC I</keyword>
<keyword id="KW-1185">Reference proteome</keyword>
<keyword id="KW-0732">Signal</keyword>
<keyword id="KW-0812">Transmembrane</keyword>
<keyword id="KW-1133">Transmembrane helix</keyword>
<feature type="signal peptide" evidence="1">
    <location>
        <begin position="1"/>
        <end position="22"/>
    </location>
</feature>
<feature type="chain" id="PRO_0000018946" description="Class I histocompatibility antigen, F10 alpha chain">
    <location>
        <begin position="23"/>
        <end position="345"/>
    </location>
</feature>
<feature type="topological domain" description="Extracellular" evidence="1">
    <location>
        <begin position="23"/>
        <end position="301"/>
    </location>
</feature>
<feature type="transmembrane region" description="Helical" evidence="1">
    <location>
        <begin position="302"/>
        <end position="324"/>
    </location>
</feature>
<feature type="topological domain" description="Cytoplasmic">
    <location>
        <begin position="325"/>
        <end position="345"/>
    </location>
</feature>
<feature type="domain" description="Ig-like C1-type">
    <location>
        <begin position="204"/>
        <end position="293"/>
    </location>
</feature>
<feature type="region of interest" description="Alpha-1">
    <location>
        <begin position="23"/>
        <end position="110"/>
    </location>
</feature>
<feature type="region of interest" description="Alpha-2">
    <location>
        <begin position="111"/>
        <end position="201"/>
    </location>
</feature>
<feature type="region of interest" description="Alpha-3">
    <location>
        <begin position="202"/>
        <end position="292"/>
    </location>
</feature>
<feature type="region of interest" description="Connecting peptide">
    <location>
        <begin position="293"/>
        <end position="301"/>
    </location>
</feature>
<feature type="glycosylation site" description="N-linked (GlcNAc...) asparagine" evidence="1">
    <location>
        <position position="59"/>
    </location>
</feature>
<feature type="glycosylation site" description="N-linked (GlcNAc...) asparagine" evidence="1">
    <location>
        <position position="107"/>
    </location>
</feature>
<feature type="disulfide bond" evidence="2">
    <location>
        <begin position="121"/>
        <end position="183"/>
    </location>
</feature>
<feature type="disulfide bond" evidence="2">
    <location>
        <begin position="221"/>
        <end position="277"/>
    </location>
</feature>
<feature type="sequence conflict" description="In Ref. 2; AAA48947." evidence="3" ref="2">
    <original>P</original>
    <variation>PDREGGSSSSST</variation>
    <location>
        <position position="339"/>
    </location>
</feature>
<feature type="strand" evidence="4">
    <location>
        <begin position="23"/>
        <end position="35"/>
    </location>
</feature>
<feature type="strand" evidence="4">
    <location>
        <begin position="43"/>
        <end position="50"/>
    </location>
</feature>
<feature type="strand" evidence="4">
    <location>
        <begin position="53"/>
        <end position="59"/>
    </location>
</feature>
<feature type="turn" evidence="4">
    <location>
        <begin position="60"/>
        <end position="62"/>
    </location>
</feature>
<feature type="helix" evidence="4">
    <location>
        <begin position="70"/>
        <end position="75"/>
    </location>
</feature>
<feature type="helix" evidence="4">
    <location>
        <begin position="78"/>
        <end position="105"/>
    </location>
</feature>
<feature type="strand" evidence="4">
    <location>
        <begin position="114"/>
        <end position="124"/>
    </location>
</feature>
<feature type="strand" evidence="4">
    <location>
        <begin position="127"/>
        <end position="137"/>
    </location>
</feature>
<feature type="strand" evidence="4">
    <location>
        <begin position="140"/>
        <end position="146"/>
    </location>
</feature>
<feature type="turn" evidence="4">
    <location>
        <begin position="147"/>
        <end position="150"/>
    </location>
</feature>
<feature type="strand" evidence="4">
    <location>
        <begin position="151"/>
        <end position="156"/>
    </location>
</feature>
<feature type="helix" evidence="4">
    <location>
        <begin position="157"/>
        <end position="159"/>
    </location>
</feature>
<feature type="helix" evidence="4">
    <location>
        <begin position="160"/>
        <end position="168"/>
    </location>
</feature>
<feature type="helix" evidence="4">
    <location>
        <begin position="171"/>
        <end position="180"/>
    </location>
</feature>
<feature type="helix" evidence="4">
    <location>
        <begin position="182"/>
        <end position="193"/>
    </location>
</feature>
<feature type="helix" evidence="4">
    <location>
        <begin position="195"/>
        <end position="198"/>
    </location>
</feature>
<feature type="strand" evidence="4">
    <location>
        <begin position="205"/>
        <end position="213"/>
    </location>
</feature>
<feature type="strand" evidence="4">
    <location>
        <begin position="216"/>
        <end position="229"/>
    </location>
</feature>
<feature type="strand" evidence="4">
    <location>
        <begin position="232"/>
        <end position="237"/>
    </location>
</feature>
<feature type="strand" evidence="4">
    <location>
        <begin position="247"/>
        <end position="253"/>
    </location>
</feature>
<feature type="strand" evidence="4">
    <location>
        <begin position="259"/>
        <end position="267"/>
    </location>
</feature>
<feature type="helix" evidence="4">
    <location>
        <begin position="272"/>
        <end position="274"/>
    </location>
</feature>
<feature type="strand" evidence="4">
    <location>
        <begin position="275"/>
        <end position="280"/>
    </location>
</feature>
<feature type="strand" evidence="4">
    <location>
        <begin position="288"/>
        <end position="290"/>
    </location>
</feature>
<sequence length="345" mass="38246">MGPCGALGLGLLLAAVCGAAAPELHTLRYIQTAMTDPGPGQPWFVTVGYVDGELFVHYNSTARRYVPRTEWIAAKADQQYWDGQTQIGQGNEQIDRENLGILQRRYNQTGGSHTVQWMYGCDILEGGPIRGYYQMAYDGRDFTAFDKGTMTFTAAVPEAVPTKRKWEEESEPERWKNYLEETCVEWLRRYVEYGKAELGRRERPEVRVWGKEADGILTLSCRAHGFYPRPIVVSWLKDGAVRGQDAHSGGIVPNGDGTYHTWVTIDAQPGDGDKYQCRVEHASLPQPGLYSWEPPQPNLVPIVAGVAVAIVAIAIMVGVGFIIYRRHAGKKGKGYNIAPGSNPAI</sequence>